<protein>
    <recommendedName>
        <fullName>Glucose transport transcription regulator RGT1</fullName>
    </recommendedName>
    <alternativeName>
        <fullName>Restores glucose transport protein 1</fullName>
    </alternativeName>
</protein>
<evidence type="ECO:0000250" key="1"/>
<evidence type="ECO:0000255" key="2">
    <source>
        <dbReference type="PROSITE-ProRule" id="PRU00227"/>
    </source>
</evidence>
<evidence type="ECO:0000256" key="3">
    <source>
        <dbReference type="SAM" id="MobiDB-lite"/>
    </source>
</evidence>
<evidence type="ECO:0000305" key="4"/>
<dbReference type="EMBL" id="CU928181">
    <property type="protein sequence ID" value="CAR30922.1"/>
    <property type="molecule type" value="Genomic_DNA"/>
</dbReference>
<dbReference type="RefSeq" id="XP_002499177.1">
    <property type="nucleotide sequence ID" value="XM_002499132.1"/>
</dbReference>
<dbReference type="FunCoup" id="C5E4G1">
    <property type="interactions" value="374"/>
</dbReference>
<dbReference type="STRING" id="559307.C5E4G1"/>
<dbReference type="GeneID" id="8204730"/>
<dbReference type="KEGG" id="zro:ZYRO0E05676g"/>
<dbReference type="HOGENOM" id="CLU_006525_0_0_1"/>
<dbReference type="InParanoid" id="C5E4G1"/>
<dbReference type="Proteomes" id="UP000008536">
    <property type="component" value="Chromosome E"/>
</dbReference>
<dbReference type="GO" id="GO:0005737">
    <property type="term" value="C:cytoplasm"/>
    <property type="evidence" value="ECO:0007669"/>
    <property type="project" value="UniProtKB-SubCell"/>
</dbReference>
<dbReference type="GO" id="GO:0005634">
    <property type="term" value="C:nucleus"/>
    <property type="evidence" value="ECO:0007669"/>
    <property type="project" value="UniProtKB-SubCell"/>
</dbReference>
<dbReference type="GO" id="GO:0003677">
    <property type="term" value="F:DNA binding"/>
    <property type="evidence" value="ECO:0007669"/>
    <property type="project" value="UniProtKB-KW"/>
</dbReference>
<dbReference type="GO" id="GO:0000981">
    <property type="term" value="F:DNA-binding transcription factor activity, RNA polymerase II-specific"/>
    <property type="evidence" value="ECO:0007669"/>
    <property type="project" value="InterPro"/>
</dbReference>
<dbReference type="GO" id="GO:0008270">
    <property type="term" value="F:zinc ion binding"/>
    <property type="evidence" value="ECO:0007669"/>
    <property type="project" value="InterPro"/>
</dbReference>
<dbReference type="CDD" id="cd00067">
    <property type="entry name" value="GAL4"/>
    <property type="match status" value="1"/>
</dbReference>
<dbReference type="Gene3D" id="4.10.240.10">
    <property type="entry name" value="Zn(2)-C6 fungal-type DNA-binding domain"/>
    <property type="match status" value="1"/>
</dbReference>
<dbReference type="InterPro" id="IPR050797">
    <property type="entry name" value="Carb_Metab_Trans_Reg"/>
</dbReference>
<dbReference type="InterPro" id="IPR036864">
    <property type="entry name" value="Zn2-C6_fun-type_DNA-bd_sf"/>
</dbReference>
<dbReference type="InterPro" id="IPR001138">
    <property type="entry name" value="Zn2Cys6_DnaBD"/>
</dbReference>
<dbReference type="PANTHER" id="PTHR31668:SF26">
    <property type="entry name" value="GLUCOSE TRANSPORT TRANSCRIPTION REGULATOR RGT1-RELATED"/>
    <property type="match status" value="1"/>
</dbReference>
<dbReference type="PANTHER" id="PTHR31668">
    <property type="entry name" value="GLUCOSE TRANSPORT TRANSCRIPTION REGULATOR RGT1-RELATED-RELATED"/>
    <property type="match status" value="1"/>
</dbReference>
<dbReference type="Pfam" id="PF00172">
    <property type="entry name" value="Zn_clus"/>
    <property type="match status" value="1"/>
</dbReference>
<dbReference type="SMART" id="SM00066">
    <property type="entry name" value="GAL4"/>
    <property type="match status" value="1"/>
</dbReference>
<dbReference type="SUPFAM" id="SSF57701">
    <property type="entry name" value="Zn2/Cys6 DNA-binding domain"/>
    <property type="match status" value="1"/>
</dbReference>
<dbReference type="PROSITE" id="PS00463">
    <property type="entry name" value="ZN2_CY6_FUNGAL_1"/>
    <property type="match status" value="1"/>
</dbReference>
<dbReference type="PROSITE" id="PS50048">
    <property type="entry name" value="ZN2_CY6_FUNGAL_2"/>
    <property type="match status" value="1"/>
</dbReference>
<accession>C5E4G1</accession>
<feature type="chain" id="PRO_0000408020" description="Glucose transport transcription regulator RGT1">
    <location>
        <begin position="1"/>
        <end position="1066"/>
    </location>
</feature>
<feature type="DNA-binding region" description="Zn(2)-C6 fungal-type" evidence="2">
    <location>
        <begin position="68"/>
        <end position="97"/>
    </location>
</feature>
<feature type="region of interest" description="Disordered" evidence="3">
    <location>
        <begin position="1"/>
        <end position="70"/>
    </location>
</feature>
<feature type="region of interest" description="Disordered" evidence="3">
    <location>
        <begin position="108"/>
        <end position="153"/>
    </location>
</feature>
<feature type="region of interest" description="Disordered" evidence="3">
    <location>
        <begin position="214"/>
        <end position="285"/>
    </location>
</feature>
<feature type="region of interest" description="Disordered" evidence="3">
    <location>
        <begin position="298"/>
        <end position="399"/>
    </location>
</feature>
<feature type="region of interest" description="Disordered" evidence="3">
    <location>
        <begin position="616"/>
        <end position="645"/>
    </location>
</feature>
<feature type="region of interest" description="Disordered" evidence="3">
    <location>
        <begin position="849"/>
        <end position="871"/>
    </location>
</feature>
<feature type="compositionally biased region" description="Polar residues" evidence="3">
    <location>
        <begin position="1"/>
        <end position="11"/>
    </location>
</feature>
<feature type="compositionally biased region" description="Polar residues" evidence="3">
    <location>
        <begin position="42"/>
        <end position="57"/>
    </location>
</feature>
<feature type="compositionally biased region" description="Polar residues" evidence="3">
    <location>
        <begin position="118"/>
        <end position="131"/>
    </location>
</feature>
<feature type="compositionally biased region" description="Polar residues" evidence="3">
    <location>
        <begin position="139"/>
        <end position="148"/>
    </location>
</feature>
<feature type="compositionally biased region" description="Polar residues" evidence="3">
    <location>
        <begin position="260"/>
        <end position="270"/>
    </location>
</feature>
<feature type="compositionally biased region" description="Polar residues" evidence="3">
    <location>
        <begin position="314"/>
        <end position="327"/>
    </location>
</feature>
<feature type="compositionally biased region" description="Low complexity" evidence="3">
    <location>
        <begin position="328"/>
        <end position="350"/>
    </location>
</feature>
<feature type="compositionally biased region" description="Low complexity" evidence="3">
    <location>
        <begin position="622"/>
        <end position="641"/>
    </location>
</feature>
<feature type="compositionally biased region" description="Polar residues" evidence="3">
    <location>
        <begin position="855"/>
        <end position="871"/>
    </location>
</feature>
<reference key="1">
    <citation type="journal article" date="2009" name="Genome Res.">
        <title>Comparative genomics of protoploid Saccharomycetaceae.</title>
        <authorList>
            <consortium name="The Genolevures Consortium"/>
            <person name="Souciet J.-L."/>
            <person name="Dujon B."/>
            <person name="Gaillardin C."/>
            <person name="Johnston M."/>
            <person name="Baret P.V."/>
            <person name="Cliften P."/>
            <person name="Sherman D.J."/>
            <person name="Weissenbach J."/>
            <person name="Westhof E."/>
            <person name="Wincker P."/>
            <person name="Jubin C."/>
            <person name="Poulain J."/>
            <person name="Barbe V."/>
            <person name="Segurens B."/>
            <person name="Artiguenave F."/>
            <person name="Anthouard V."/>
            <person name="Vacherie B."/>
            <person name="Val M.-E."/>
            <person name="Fulton R.S."/>
            <person name="Minx P."/>
            <person name="Wilson R."/>
            <person name="Durrens P."/>
            <person name="Jean G."/>
            <person name="Marck C."/>
            <person name="Martin T."/>
            <person name="Nikolski M."/>
            <person name="Rolland T."/>
            <person name="Seret M.-L."/>
            <person name="Casaregola S."/>
            <person name="Despons L."/>
            <person name="Fairhead C."/>
            <person name="Fischer G."/>
            <person name="Lafontaine I."/>
            <person name="Leh V."/>
            <person name="Lemaire M."/>
            <person name="de Montigny J."/>
            <person name="Neuveglise C."/>
            <person name="Thierry A."/>
            <person name="Blanc-Lenfle I."/>
            <person name="Bleykasten C."/>
            <person name="Diffels J."/>
            <person name="Fritsch E."/>
            <person name="Frangeul L."/>
            <person name="Goeffon A."/>
            <person name="Jauniaux N."/>
            <person name="Kachouri-Lafond R."/>
            <person name="Payen C."/>
            <person name="Potier S."/>
            <person name="Pribylova L."/>
            <person name="Ozanne C."/>
            <person name="Richard G.-F."/>
            <person name="Sacerdot C."/>
            <person name="Straub M.-L."/>
            <person name="Talla E."/>
        </authorList>
    </citation>
    <scope>NUCLEOTIDE SEQUENCE [LARGE SCALE GENOMIC DNA]</scope>
    <source>
        <strain>ATCC 2623 / CBS 732 / BCRC 21506 / NBRC 1130 / NCYC 568 / NRRL Y-229</strain>
    </source>
</reference>
<proteinExistence type="inferred from homology"/>
<keyword id="KW-0010">Activator</keyword>
<keyword id="KW-0963">Cytoplasm</keyword>
<keyword id="KW-0238">DNA-binding</keyword>
<keyword id="KW-0479">Metal-binding</keyword>
<keyword id="KW-0539">Nucleus</keyword>
<keyword id="KW-1185">Reference proteome</keyword>
<keyword id="KW-0678">Repressor</keyword>
<keyword id="KW-0804">Transcription</keyword>
<keyword id="KW-0805">Transcription regulation</keyword>
<keyword id="KW-0862">Zinc</keyword>
<organism>
    <name type="scientific">Zygosaccharomyces rouxii (strain ATCC 2623 / CBS 732 / NBRC 1130 / NCYC 568 / NRRL Y-229)</name>
    <dbReference type="NCBI Taxonomy" id="559307"/>
    <lineage>
        <taxon>Eukaryota</taxon>
        <taxon>Fungi</taxon>
        <taxon>Dikarya</taxon>
        <taxon>Ascomycota</taxon>
        <taxon>Saccharomycotina</taxon>
        <taxon>Saccharomycetes</taxon>
        <taxon>Saccharomycetales</taxon>
        <taxon>Saccharomycetaceae</taxon>
        <taxon>Zygosaccharomyces</taxon>
    </lineage>
</organism>
<comment type="function">
    <text evidence="1">Glucose-responsive transcription factor that regulates expression of several glucose transporter (HXT) genes in response to glucose. In the absence of glucose, it functions as a transcriptional repressor, whereas high concentrations of glucose cause it to function as a transcriptional activator. In cells growing on low levels of glucose, has a neutral role, neither repressing nor activating transcription (By similarity).</text>
</comment>
<comment type="subcellular location">
    <subcellularLocation>
        <location evidence="2">Nucleus</location>
    </subcellularLocation>
    <subcellularLocation>
        <location evidence="1">Cytoplasm</location>
    </subcellularLocation>
</comment>
<comment type="similarity">
    <text evidence="4">Belongs to the EDS1/RGT1 family.</text>
</comment>
<sequence length="1066" mass="118463">MTPMSENNGSENTRDVSAAMMKSRSNSSEYAGGDGSFHASEVESQSSQGASGGNTSASKRRTKASRACDQCRKRKIRCDYDDDKGVCTSCRKNGESCAFERIQLKRGPSKGAVRGHSVSRSISGENNNTAATAVGSGGEFSSPSSRQGSVLLPPLGQYLPQPAPVPSNLNATQQQQFWKVPYHDFQGQRRGSIDSLSSDMSAKSVNIPQEHLLYASPSAGHPPLHSPVTFGPNNSSTDSGYWPFRNSGGEESDELRRKSGSNPPSLKNVSQPPPPPLQQQQQQQYSYSKFNNSFAQYGANGFPSRHGSIASEGMSPSASVPYQSVPMNQSNSNGLSQQQQQPIQWPKVQPKNLPPPQVQVQAADKEETLGNSFQKTIKKRRTVSASSGENKAEPGEYPLARFSSSGNDSLLGGNLVSPAGFVYGQIPEIQLIDIYYEFIHMVFPIIPLNKETVTNEILLVNTQPISPIHEINNYVILWFRNSLELLIRITLKRRSGHFYDSLTHSKERELSNEIRGNSNGGGSNDSKDDNLEMQGVFVTALNECLQKIVDIHPSFRENKDKISPKVKIIYLSTFVLLNYILAVVGYDNSFVLGMSTTIFKDFKVYELLLYDDEDDDATKSGSNDNDNTNNDNNSNNANNDNNDSRFYDENNAMNWDQAGYSITFKRLYVLLIIFDSLQCCSYGGPKLLNVPIEGASERFFQTKPHSNSKWVVDQSPTRMKFILQSVKFGELLAECSMKRRSICDLSRTQLTWEIPPYFLKGVTDEDDELFSLAQLLAAFILIRKEFVDCLLNLQDLETGELPTVDMELCGELIKLLCQLTSIILQALTVMMRTNPKNHIDYNYRPMKPMEHDDSGNSASRKFTTSQAESGKNSGNDFYHKLLGLQDNAEACLTNLLRGSISPYCISMLREIRNVMELVKKMPASLIGVVMACAGTHHNTANNNNNDPLAITFQSQELVVKLSNCMNDMMQITSLLNMIKPVNLSDQDSDNTSATATITTTETISKSLNRDHSIMRRLYYSKAAKRDKKHIYPSSSSSPQLQETITTLKSFVLIGWKLLDDFELGWS</sequence>
<gene>
    <name type="primary">RGT1</name>
    <name type="ordered locus">ZYRO0E05676g</name>
</gene>
<name>RGT1_ZYGRC</name>